<reference key="1">
    <citation type="book" date="2006" name="Gram positive pathogens, 2nd edition">
        <title>The Staphylococcus aureus NCTC 8325 genome.</title>
        <editorList>
            <person name="Fischetti V."/>
            <person name="Novick R."/>
            <person name="Ferretti J."/>
            <person name="Portnoy D."/>
            <person name="Rood J."/>
        </editorList>
        <authorList>
            <person name="Gillaspy A.F."/>
            <person name="Worrell V."/>
            <person name="Orvis J."/>
            <person name="Roe B.A."/>
            <person name="Dyer D.W."/>
            <person name="Iandolo J.J."/>
        </authorList>
    </citation>
    <scope>NUCLEOTIDE SEQUENCE [LARGE SCALE GENOMIC DNA]</scope>
    <source>
        <strain>NCTC 8325 / PS 47</strain>
    </source>
</reference>
<organism>
    <name type="scientific">Staphylococcus aureus (strain NCTC 8325 / PS 47)</name>
    <dbReference type="NCBI Taxonomy" id="93061"/>
    <lineage>
        <taxon>Bacteria</taxon>
        <taxon>Bacillati</taxon>
        <taxon>Bacillota</taxon>
        <taxon>Bacilli</taxon>
        <taxon>Bacillales</taxon>
        <taxon>Staphylococcaceae</taxon>
        <taxon>Staphylococcus</taxon>
    </lineage>
</organism>
<name>ILVA_STAA8</name>
<proteinExistence type="inferred from homology"/>
<dbReference type="EC" id="4.3.1.19"/>
<dbReference type="EMBL" id="CP000253">
    <property type="protein sequence ID" value="ABD31327.1"/>
    <property type="molecule type" value="Genomic_DNA"/>
</dbReference>
<dbReference type="RefSeq" id="WP_000216853.1">
    <property type="nucleotide sequence ID" value="NZ_LS483365.1"/>
</dbReference>
<dbReference type="RefSeq" id="YP_500771.1">
    <property type="nucleotide sequence ID" value="NC_007795.1"/>
</dbReference>
<dbReference type="SMR" id="Q2FWJ9"/>
<dbReference type="STRING" id="93061.SAOUHSC_02289"/>
<dbReference type="PaxDb" id="1280-SAXN108_2306"/>
<dbReference type="GeneID" id="3919164"/>
<dbReference type="KEGG" id="sao:SAOUHSC_02289"/>
<dbReference type="PATRIC" id="fig|93061.5.peg.2079"/>
<dbReference type="eggNOG" id="COG1171">
    <property type="taxonomic scope" value="Bacteria"/>
</dbReference>
<dbReference type="HOGENOM" id="CLU_021152_4_2_9"/>
<dbReference type="OrthoDB" id="9811476at2"/>
<dbReference type="UniPathway" id="UPA00047">
    <property type="reaction ID" value="UER00054"/>
</dbReference>
<dbReference type="PRO" id="PR:Q2FWJ9"/>
<dbReference type="Proteomes" id="UP000008816">
    <property type="component" value="Chromosome"/>
</dbReference>
<dbReference type="GO" id="GO:0030170">
    <property type="term" value="F:pyridoxal phosphate binding"/>
    <property type="evidence" value="ECO:0007669"/>
    <property type="project" value="InterPro"/>
</dbReference>
<dbReference type="GO" id="GO:0004794">
    <property type="term" value="F:threonine deaminase activity"/>
    <property type="evidence" value="ECO:0000318"/>
    <property type="project" value="GO_Central"/>
</dbReference>
<dbReference type="GO" id="GO:0009097">
    <property type="term" value="P:isoleucine biosynthetic process"/>
    <property type="evidence" value="ECO:0000318"/>
    <property type="project" value="GO_Central"/>
</dbReference>
<dbReference type="GO" id="GO:0006566">
    <property type="term" value="P:threonine metabolic process"/>
    <property type="evidence" value="ECO:0000250"/>
    <property type="project" value="UniProtKB"/>
</dbReference>
<dbReference type="CDD" id="cd04907">
    <property type="entry name" value="ACT_ThrD-I_2"/>
    <property type="match status" value="1"/>
</dbReference>
<dbReference type="CDD" id="cd01562">
    <property type="entry name" value="Thr-dehyd"/>
    <property type="match status" value="1"/>
</dbReference>
<dbReference type="FunFam" id="3.40.1020.10:FF:000002">
    <property type="entry name" value="L-threonine dehydratase"/>
    <property type="match status" value="1"/>
</dbReference>
<dbReference type="FunFam" id="3.40.50.1100:FF:000005">
    <property type="entry name" value="Threonine dehydratase catabolic"/>
    <property type="match status" value="1"/>
</dbReference>
<dbReference type="Gene3D" id="3.40.50.1100">
    <property type="match status" value="2"/>
</dbReference>
<dbReference type="Gene3D" id="3.40.1020.10">
    <property type="entry name" value="Biosynthetic Threonine Deaminase, Domain 3"/>
    <property type="match status" value="1"/>
</dbReference>
<dbReference type="InterPro" id="IPR045865">
    <property type="entry name" value="ACT-like_dom_sf"/>
</dbReference>
<dbReference type="InterPro" id="IPR011820">
    <property type="entry name" value="IlvA"/>
</dbReference>
<dbReference type="InterPro" id="IPR050147">
    <property type="entry name" value="Ser/Thr_Dehydratase"/>
</dbReference>
<dbReference type="InterPro" id="IPR000634">
    <property type="entry name" value="Ser/Thr_deHydtase_PyrdxlP-BS"/>
</dbReference>
<dbReference type="InterPro" id="IPR001721">
    <property type="entry name" value="TD_ACT-like"/>
</dbReference>
<dbReference type="InterPro" id="IPR038110">
    <property type="entry name" value="TD_ACT-like_sf"/>
</dbReference>
<dbReference type="InterPro" id="IPR001926">
    <property type="entry name" value="TrpB-like_PALP"/>
</dbReference>
<dbReference type="InterPro" id="IPR036052">
    <property type="entry name" value="TrpB-like_PALP_sf"/>
</dbReference>
<dbReference type="NCBIfam" id="NF006390">
    <property type="entry name" value="PRK08639.1"/>
    <property type="match status" value="1"/>
</dbReference>
<dbReference type="NCBIfam" id="TIGR02079">
    <property type="entry name" value="THD1"/>
    <property type="match status" value="1"/>
</dbReference>
<dbReference type="PANTHER" id="PTHR48078:SF11">
    <property type="entry name" value="THREONINE DEHYDRATASE, MITOCHONDRIAL"/>
    <property type="match status" value="1"/>
</dbReference>
<dbReference type="PANTHER" id="PTHR48078">
    <property type="entry name" value="THREONINE DEHYDRATASE, MITOCHONDRIAL-RELATED"/>
    <property type="match status" value="1"/>
</dbReference>
<dbReference type="Pfam" id="PF00291">
    <property type="entry name" value="PALP"/>
    <property type="match status" value="1"/>
</dbReference>
<dbReference type="Pfam" id="PF00585">
    <property type="entry name" value="Thr_dehydrat_C"/>
    <property type="match status" value="1"/>
</dbReference>
<dbReference type="SUPFAM" id="SSF55021">
    <property type="entry name" value="ACT-like"/>
    <property type="match status" value="1"/>
</dbReference>
<dbReference type="SUPFAM" id="SSF53686">
    <property type="entry name" value="Tryptophan synthase beta subunit-like PLP-dependent enzymes"/>
    <property type="match status" value="1"/>
</dbReference>
<dbReference type="PROSITE" id="PS51672">
    <property type="entry name" value="ACT_LIKE"/>
    <property type="match status" value="1"/>
</dbReference>
<dbReference type="PROSITE" id="PS00165">
    <property type="entry name" value="DEHYDRATASE_SER_THR"/>
    <property type="match status" value="1"/>
</dbReference>
<gene>
    <name type="primary">ilvA</name>
    <name type="ordered locus">SAOUHSC_02289</name>
</gene>
<evidence type="ECO:0000250" key="1"/>
<evidence type="ECO:0000255" key="2">
    <source>
        <dbReference type="PROSITE-ProRule" id="PRU01008"/>
    </source>
</evidence>
<evidence type="ECO:0000305" key="3"/>
<sequence>MTVKTTVSTKDIDEAFLRLKDIVKETPLQLDHYLSQKYDCKVYLKREDLQWVRSFKLRGAYNAISVLSDEAKSKGITCASAGNHAQGVAYTAKKLNLNAVIFMPVTTPLQKVNQVKFFGNSNVEVVLTGDTFDHCLAEALTYTSEHQMNFIDPFNNVHTISGQGTLAKEMLEQAKSDNVNFDYLFAAIGGGGLISGISTYFKTYSPTTKIIGVEPSGASSMYESVVVNNQVVTLPNIDKFVDGASVARVGDITFEIAKENVDDYVQVDEGAVCSTILDMYSKQAIVAEPAGALSVSALENYKDHIKGKTVVCVISGGNNDINRMKEIEERSLLYEEMKHYFILNFPQRPGALREFVNDVLGPQDDITKFEYLKKSSQNTGTVIIGIQLKDHDDLIQLKQRVNHFDPSNIYINENKMLYSLLI</sequence>
<comment type="function">
    <text evidence="1">Catalyzes the anaerobic formation of alpha-ketobutyrate and ammonia from threonine in a two-step reaction. The first step involved a dehydration of threonine and a production of enamine intermediates (aminocrotonate), which tautomerizes to its imine form (iminobutyrate). Both intermediates are unstable and short-lived. The second step is the nonenzymatic hydrolysis of the enamine/imine intermediates to form 2-ketobutyrate and free ammonia. In the low water environment of the cell, the second step is accelerated by RidA (By similarity).</text>
</comment>
<comment type="catalytic activity">
    <reaction>
        <text>L-threonine = 2-oxobutanoate + NH4(+)</text>
        <dbReference type="Rhea" id="RHEA:22108"/>
        <dbReference type="ChEBI" id="CHEBI:16763"/>
        <dbReference type="ChEBI" id="CHEBI:28938"/>
        <dbReference type="ChEBI" id="CHEBI:57926"/>
        <dbReference type="EC" id="4.3.1.19"/>
    </reaction>
</comment>
<comment type="cofactor">
    <cofactor evidence="1">
        <name>pyridoxal 5'-phosphate</name>
        <dbReference type="ChEBI" id="CHEBI:597326"/>
    </cofactor>
</comment>
<comment type="pathway">
    <text>Amino-acid biosynthesis; L-isoleucine biosynthesis; 2-oxobutanoate from L-threonine: step 1/1.</text>
</comment>
<comment type="subunit">
    <text evidence="1">Homotetramer.</text>
</comment>
<comment type="similarity">
    <text evidence="3">Belongs to the serine/threonine dehydratase family.</text>
</comment>
<feature type="chain" id="PRO_0000287209" description="L-threonine dehydratase biosynthetic IlvA">
    <location>
        <begin position="1"/>
        <end position="422"/>
    </location>
</feature>
<feature type="domain" description="ACT-like" evidence="2">
    <location>
        <begin position="339"/>
        <end position="413"/>
    </location>
</feature>
<feature type="binding site" evidence="1">
    <location>
        <position position="83"/>
    </location>
    <ligand>
        <name>pyridoxal 5'-phosphate</name>
        <dbReference type="ChEBI" id="CHEBI:597326"/>
    </ligand>
</feature>
<feature type="binding site" evidence="1">
    <location>
        <begin position="189"/>
        <end position="193"/>
    </location>
    <ligand>
        <name>pyridoxal 5'-phosphate</name>
        <dbReference type="ChEBI" id="CHEBI:597326"/>
    </ligand>
</feature>
<feature type="binding site" evidence="1">
    <location>
        <position position="315"/>
    </location>
    <ligand>
        <name>pyridoxal 5'-phosphate</name>
        <dbReference type="ChEBI" id="CHEBI:597326"/>
    </ligand>
</feature>
<feature type="modified residue" description="N6-(pyridoxal phosphate)lysine" evidence="1">
    <location>
        <position position="56"/>
    </location>
</feature>
<keyword id="KW-0028">Amino-acid biosynthesis</keyword>
<keyword id="KW-0100">Branched-chain amino acid biosynthesis</keyword>
<keyword id="KW-0412">Isoleucine biosynthesis</keyword>
<keyword id="KW-0456">Lyase</keyword>
<keyword id="KW-0663">Pyridoxal phosphate</keyword>
<keyword id="KW-1185">Reference proteome</keyword>
<protein>
    <recommendedName>
        <fullName>L-threonine dehydratase biosynthetic IlvA</fullName>
        <ecNumber>4.3.1.19</ecNumber>
    </recommendedName>
    <alternativeName>
        <fullName>Threonine deaminase</fullName>
    </alternativeName>
</protein>
<accession>Q2FWJ9</accession>